<keyword id="KW-0066">ATP synthesis</keyword>
<keyword id="KW-0997">Cell inner membrane</keyword>
<keyword id="KW-1003">Cell membrane</keyword>
<keyword id="KW-0139">CF(1)</keyword>
<keyword id="KW-0375">Hydrogen ion transport</keyword>
<keyword id="KW-0406">Ion transport</keyword>
<keyword id="KW-0472">Membrane</keyword>
<keyword id="KW-1185">Reference proteome</keyword>
<keyword id="KW-0813">Transport</keyword>
<gene>
    <name evidence="1" type="primary">atpH</name>
    <name type="ordered locus">SPO3165</name>
</gene>
<organism>
    <name type="scientific">Ruegeria pomeroyi (strain ATCC 700808 / DSM 15171 / DSS-3)</name>
    <name type="common">Silicibacter pomeroyi</name>
    <dbReference type="NCBI Taxonomy" id="246200"/>
    <lineage>
        <taxon>Bacteria</taxon>
        <taxon>Pseudomonadati</taxon>
        <taxon>Pseudomonadota</taxon>
        <taxon>Alphaproteobacteria</taxon>
        <taxon>Rhodobacterales</taxon>
        <taxon>Roseobacteraceae</taxon>
        <taxon>Ruegeria</taxon>
    </lineage>
</organism>
<name>ATPD_RUEPO</name>
<dbReference type="EMBL" id="CP000031">
    <property type="protein sequence ID" value="AAV96400.1"/>
    <property type="molecule type" value="Genomic_DNA"/>
</dbReference>
<dbReference type="RefSeq" id="WP_011048855.1">
    <property type="nucleotide sequence ID" value="NC_003911.12"/>
</dbReference>
<dbReference type="SMR" id="Q5LNN8"/>
<dbReference type="STRING" id="246200.SPO3165"/>
<dbReference type="PaxDb" id="246200-SPO3165"/>
<dbReference type="KEGG" id="sil:SPO3165"/>
<dbReference type="eggNOG" id="COG0712">
    <property type="taxonomic scope" value="Bacteria"/>
</dbReference>
<dbReference type="HOGENOM" id="CLU_085114_0_1_5"/>
<dbReference type="OrthoDB" id="9796185at2"/>
<dbReference type="Proteomes" id="UP000001023">
    <property type="component" value="Chromosome"/>
</dbReference>
<dbReference type="GO" id="GO:0005886">
    <property type="term" value="C:plasma membrane"/>
    <property type="evidence" value="ECO:0007669"/>
    <property type="project" value="UniProtKB-SubCell"/>
</dbReference>
<dbReference type="GO" id="GO:0045259">
    <property type="term" value="C:proton-transporting ATP synthase complex"/>
    <property type="evidence" value="ECO:0007669"/>
    <property type="project" value="UniProtKB-KW"/>
</dbReference>
<dbReference type="GO" id="GO:0046933">
    <property type="term" value="F:proton-transporting ATP synthase activity, rotational mechanism"/>
    <property type="evidence" value="ECO:0007669"/>
    <property type="project" value="UniProtKB-UniRule"/>
</dbReference>
<dbReference type="Gene3D" id="1.10.520.20">
    <property type="entry name" value="N-terminal domain of the delta subunit of the F1F0-ATP synthase"/>
    <property type="match status" value="1"/>
</dbReference>
<dbReference type="HAMAP" id="MF_01416">
    <property type="entry name" value="ATP_synth_delta_bact"/>
    <property type="match status" value="1"/>
</dbReference>
<dbReference type="InterPro" id="IPR026015">
    <property type="entry name" value="ATP_synth_OSCP/delta_N_sf"/>
</dbReference>
<dbReference type="InterPro" id="IPR020781">
    <property type="entry name" value="ATPase_OSCP/d_CS"/>
</dbReference>
<dbReference type="InterPro" id="IPR000711">
    <property type="entry name" value="ATPase_OSCP/dsu"/>
</dbReference>
<dbReference type="NCBIfam" id="TIGR01145">
    <property type="entry name" value="ATP_synt_delta"/>
    <property type="match status" value="1"/>
</dbReference>
<dbReference type="NCBIfam" id="NF004402">
    <property type="entry name" value="PRK05758.2-2"/>
    <property type="match status" value="1"/>
</dbReference>
<dbReference type="NCBIfam" id="NF004406">
    <property type="entry name" value="PRK05758.3-2"/>
    <property type="match status" value="1"/>
</dbReference>
<dbReference type="PANTHER" id="PTHR11910">
    <property type="entry name" value="ATP SYNTHASE DELTA CHAIN"/>
    <property type="match status" value="1"/>
</dbReference>
<dbReference type="Pfam" id="PF00213">
    <property type="entry name" value="OSCP"/>
    <property type="match status" value="1"/>
</dbReference>
<dbReference type="PRINTS" id="PR00125">
    <property type="entry name" value="ATPASEDELTA"/>
</dbReference>
<dbReference type="SUPFAM" id="SSF47928">
    <property type="entry name" value="N-terminal domain of the delta subunit of the F1F0-ATP synthase"/>
    <property type="match status" value="1"/>
</dbReference>
<dbReference type="PROSITE" id="PS00389">
    <property type="entry name" value="ATPASE_DELTA"/>
    <property type="match status" value="1"/>
</dbReference>
<comment type="function">
    <text evidence="1">F(1)F(0) ATP synthase produces ATP from ADP in the presence of a proton or sodium gradient. F-type ATPases consist of two structural domains, F(1) containing the extramembraneous catalytic core and F(0) containing the membrane proton channel, linked together by a central stalk and a peripheral stalk. During catalysis, ATP synthesis in the catalytic domain of F(1) is coupled via a rotary mechanism of the central stalk subunits to proton translocation.</text>
</comment>
<comment type="function">
    <text evidence="1">This protein is part of the stalk that links CF(0) to CF(1). It either transmits conformational changes from CF(0) to CF(1) or is implicated in proton conduction.</text>
</comment>
<comment type="subunit">
    <text evidence="1">F-type ATPases have 2 components, F(1) - the catalytic core - and F(0) - the membrane proton channel. F(1) has five subunits: alpha(3), beta(3), gamma(1), delta(1), epsilon(1). F(0) has three main subunits: a(1), b(2) and c(10-14). The alpha and beta chains form an alternating ring which encloses part of the gamma chain. F(1) is attached to F(0) by a central stalk formed by the gamma and epsilon chains, while a peripheral stalk is formed by the delta and b chains.</text>
</comment>
<comment type="subcellular location">
    <subcellularLocation>
        <location evidence="1">Cell inner membrane</location>
        <topology evidence="1">Peripheral membrane protein</topology>
    </subcellularLocation>
</comment>
<comment type="similarity">
    <text evidence="1">Belongs to the ATPase delta chain family.</text>
</comment>
<proteinExistence type="inferred from homology"/>
<accession>Q5LNN8</accession>
<reference key="1">
    <citation type="journal article" date="2004" name="Nature">
        <title>Genome sequence of Silicibacter pomeroyi reveals adaptations to the marine environment.</title>
        <authorList>
            <person name="Moran M.A."/>
            <person name="Buchan A."/>
            <person name="Gonzalez J.M."/>
            <person name="Heidelberg J.F."/>
            <person name="Whitman W.B."/>
            <person name="Kiene R.P."/>
            <person name="Henriksen J.R."/>
            <person name="King G.M."/>
            <person name="Belas R."/>
            <person name="Fuqua C."/>
            <person name="Brinkac L.M."/>
            <person name="Lewis M."/>
            <person name="Johri S."/>
            <person name="Weaver B."/>
            <person name="Pai G."/>
            <person name="Eisen J.A."/>
            <person name="Rahe E."/>
            <person name="Sheldon W.M."/>
            <person name="Ye W."/>
            <person name="Miller T.R."/>
            <person name="Carlton J."/>
            <person name="Rasko D.A."/>
            <person name="Paulsen I.T."/>
            <person name="Ren Q."/>
            <person name="Daugherty S.C."/>
            <person name="DeBoy R.T."/>
            <person name="Dodson R.J."/>
            <person name="Durkin A.S."/>
            <person name="Madupu R."/>
            <person name="Nelson W.C."/>
            <person name="Sullivan S.A."/>
            <person name="Rosovitz M.J."/>
            <person name="Haft D.H."/>
            <person name="Selengut J."/>
            <person name="Ward N."/>
        </authorList>
    </citation>
    <scope>NUCLEOTIDE SEQUENCE [LARGE SCALE GENOMIC DNA]</scope>
    <source>
        <strain>ATCC 700808 / DSM 15171 / DSS-3</strain>
    </source>
</reference>
<reference key="2">
    <citation type="journal article" date="2014" name="Stand. Genomic Sci.">
        <title>An updated genome annotation for the model marine bacterium Ruegeria pomeroyi DSS-3.</title>
        <authorList>
            <person name="Rivers A.R."/>
            <person name="Smith C.B."/>
            <person name="Moran M.A."/>
        </authorList>
    </citation>
    <scope>GENOME REANNOTATION</scope>
    <source>
        <strain>ATCC 700808 / DSM 15171 / DSS-3</strain>
    </source>
</reference>
<protein>
    <recommendedName>
        <fullName evidence="1">ATP synthase subunit delta</fullName>
    </recommendedName>
    <alternativeName>
        <fullName evidence="1">ATP synthase F(1) sector subunit delta</fullName>
    </alternativeName>
    <alternativeName>
        <fullName evidence="1">F-type ATPase subunit delta</fullName>
        <shortName evidence="1">F-ATPase subunit delta</shortName>
    </alternativeName>
</protein>
<sequence>MSEPASISAGIAQRYATAIFAIAQDNNDLKGLETGINDLTAALGESADLRSLIASPLVSRAEQEAAITAVAKKMKLNPVLANALSLMAQKRRLFVLPQLLTALRDALAEARGEVTAEVASAKALTKTQIEKLTKTLSEKVGKSVTINATVDESLIGGLVVKVGSKMIDSSIRSKLNSLQNAMKEVG</sequence>
<feature type="chain" id="PRO_0000371144" description="ATP synthase subunit delta">
    <location>
        <begin position="1"/>
        <end position="186"/>
    </location>
</feature>
<evidence type="ECO:0000255" key="1">
    <source>
        <dbReference type="HAMAP-Rule" id="MF_01416"/>
    </source>
</evidence>